<keyword id="KW-0489">Methyltransferase</keyword>
<keyword id="KW-0539">Nucleus</keyword>
<keyword id="KW-1185">Reference proteome</keyword>
<keyword id="KW-0694">RNA-binding</keyword>
<keyword id="KW-0949">S-adenosyl-L-methionine</keyword>
<keyword id="KW-0808">Transferase</keyword>
<keyword id="KW-0819">tRNA processing</keyword>
<keyword id="KW-0820">tRNA-binding</keyword>
<feature type="chain" id="PRO_0000370599" description="tRNA (guanine-N(7)-)-methyltransferase">
    <location>
        <begin position="1"/>
        <end position="360"/>
    </location>
</feature>
<feature type="region of interest" description="Disordered" evidence="2">
    <location>
        <begin position="1"/>
        <end position="32"/>
    </location>
</feature>
<feature type="region of interest" description="Disordered" evidence="2">
    <location>
        <begin position="177"/>
        <end position="196"/>
    </location>
</feature>
<feature type="compositionally biased region" description="Polar residues" evidence="2">
    <location>
        <begin position="183"/>
        <end position="196"/>
    </location>
</feature>
<feature type="active site" evidence="1">
    <location>
        <position position="232"/>
    </location>
</feature>
<feature type="binding site" evidence="1">
    <location>
        <position position="99"/>
    </location>
    <ligand>
        <name>S-adenosyl-L-methionine</name>
        <dbReference type="ChEBI" id="CHEBI:59789"/>
    </ligand>
</feature>
<feature type="binding site" evidence="1">
    <location>
        <begin position="122"/>
        <end position="123"/>
    </location>
    <ligand>
        <name>S-adenosyl-L-methionine</name>
        <dbReference type="ChEBI" id="CHEBI:59789"/>
    </ligand>
</feature>
<feature type="binding site" evidence="1">
    <location>
        <begin position="209"/>
        <end position="210"/>
    </location>
    <ligand>
        <name>S-adenosyl-L-methionine</name>
        <dbReference type="ChEBI" id="CHEBI:59789"/>
    </ligand>
</feature>
<feature type="binding site" evidence="1">
    <location>
        <position position="229"/>
    </location>
    <ligand>
        <name>S-adenosyl-L-methionine</name>
        <dbReference type="ChEBI" id="CHEBI:59789"/>
    </ligand>
</feature>
<feature type="binding site" evidence="1">
    <location>
        <begin position="332"/>
        <end position="334"/>
    </location>
    <ligand>
        <name>S-adenosyl-L-methionine</name>
        <dbReference type="ChEBI" id="CHEBI:59789"/>
    </ligand>
</feature>
<organism>
    <name type="scientific">Neosartorya fischeri (strain ATCC 1020 / DSM 3700 / CBS 544.65 / FGSC A1164 / JCM 1740 / NRRL 181 / WB 181)</name>
    <name type="common">Aspergillus fischerianus</name>
    <dbReference type="NCBI Taxonomy" id="331117"/>
    <lineage>
        <taxon>Eukaryota</taxon>
        <taxon>Fungi</taxon>
        <taxon>Dikarya</taxon>
        <taxon>Ascomycota</taxon>
        <taxon>Pezizomycotina</taxon>
        <taxon>Eurotiomycetes</taxon>
        <taxon>Eurotiomycetidae</taxon>
        <taxon>Eurotiales</taxon>
        <taxon>Aspergillaceae</taxon>
        <taxon>Aspergillus</taxon>
        <taxon>Aspergillus subgen. Fumigati</taxon>
    </lineage>
</organism>
<comment type="function">
    <text evidence="1">Catalyzes the formation of N(7)-methylguanine at position 46 (m7G46) in tRNA.</text>
</comment>
<comment type="catalytic activity">
    <reaction evidence="1">
        <text>guanosine(46) in tRNA + S-adenosyl-L-methionine = N(7)-methylguanosine(46) in tRNA + S-adenosyl-L-homocysteine</text>
        <dbReference type="Rhea" id="RHEA:42708"/>
        <dbReference type="Rhea" id="RHEA-COMP:10188"/>
        <dbReference type="Rhea" id="RHEA-COMP:10189"/>
        <dbReference type="ChEBI" id="CHEBI:57856"/>
        <dbReference type="ChEBI" id="CHEBI:59789"/>
        <dbReference type="ChEBI" id="CHEBI:74269"/>
        <dbReference type="ChEBI" id="CHEBI:74480"/>
        <dbReference type="EC" id="2.1.1.33"/>
    </reaction>
</comment>
<comment type="pathway">
    <text evidence="1">tRNA modification; N(7)-methylguanine-tRNA biosynthesis.</text>
</comment>
<comment type="subunit">
    <text evidence="1">Forms a complex with trm82.</text>
</comment>
<comment type="subcellular location">
    <subcellularLocation>
        <location evidence="1">Nucleus</location>
    </subcellularLocation>
</comment>
<comment type="similarity">
    <text evidence="1">Belongs to the class I-like SAM-binding methyltransferase superfamily. TrmB family.</text>
</comment>
<evidence type="ECO:0000255" key="1">
    <source>
        <dbReference type="HAMAP-Rule" id="MF_03055"/>
    </source>
</evidence>
<evidence type="ECO:0000256" key="2">
    <source>
        <dbReference type="SAM" id="MobiDB-lite"/>
    </source>
</evidence>
<gene>
    <name type="primary">trm8</name>
    <name type="ORF">NFIA_103990</name>
</gene>
<accession>A1CWA9</accession>
<sequence length="360" mass="40001">MTPPPPKRQKRDEYRKATAEAASQPGPSDVAEIKLPKKKYYRQRAHANPFSDHHLNYPLSPAHMDWSSHYPAFVDPDPSHTNLAGARKLLKDVEVVDIGCGFGGLLIGLAPLLPESLIVGMEIRVSVLEYVTTRIQALRAQQLKLRAATAAATAASETPSQQQAQIDGKQANANAAADAASPVLSTDTEHTPTTLVPGSYENISAIRSNTMKFFPNFFARHQLSKIFICFPDPHFKARKHKARIISETLNAEYAYALRPGGLLYTITDVEEYHHWILRHFGVESGAEEESEEKSTSANANANANAGVRELFERVSEEELEKDECVRVMKEATEEGKKVARNKGNKYVAVFRRKTDPEWPA</sequence>
<protein>
    <recommendedName>
        <fullName evidence="1">tRNA (guanine-N(7)-)-methyltransferase</fullName>
        <ecNumber evidence="1">2.1.1.33</ecNumber>
    </recommendedName>
    <alternativeName>
        <fullName evidence="1">Transfer RNA methyltransferase 8</fullName>
    </alternativeName>
    <alternativeName>
        <fullName evidence="1">tRNA (guanine(46)-N(7))-methyltransferase</fullName>
    </alternativeName>
    <alternativeName>
        <fullName evidence="1">tRNA(m7G46)-methyltransferase</fullName>
    </alternativeName>
</protein>
<dbReference type="EC" id="2.1.1.33" evidence="1"/>
<dbReference type="EMBL" id="DS027685">
    <property type="protein sequence ID" value="EAW24911.1"/>
    <property type="molecule type" value="Genomic_DNA"/>
</dbReference>
<dbReference type="RefSeq" id="XP_001266808.1">
    <property type="nucleotide sequence ID" value="XM_001266807.1"/>
</dbReference>
<dbReference type="SMR" id="A1CWA9"/>
<dbReference type="STRING" id="331117.A1CWA9"/>
<dbReference type="EnsemblFungi" id="EAW24911">
    <property type="protein sequence ID" value="EAW24911"/>
    <property type="gene ID" value="NFIA_103990"/>
</dbReference>
<dbReference type="GeneID" id="4593789"/>
<dbReference type="KEGG" id="nfi:NFIA_103990"/>
<dbReference type="VEuPathDB" id="FungiDB:NFIA_103990"/>
<dbReference type="eggNOG" id="KOG3115">
    <property type="taxonomic scope" value="Eukaryota"/>
</dbReference>
<dbReference type="HOGENOM" id="CLU_050910_3_1_1"/>
<dbReference type="OMA" id="LPNYFAK"/>
<dbReference type="OrthoDB" id="47276at2759"/>
<dbReference type="UniPathway" id="UPA00989"/>
<dbReference type="Proteomes" id="UP000006702">
    <property type="component" value="Unassembled WGS sequence"/>
</dbReference>
<dbReference type="GO" id="GO:0005634">
    <property type="term" value="C:nucleus"/>
    <property type="evidence" value="ECO:0007669"/>
    <property type="project" value="UniProtKB-SubCell"/>
</dbReference>
<dbReference type="GO" id="GO:0043527">
    <property type="term" value="C:tRNA methyltransferase complex"/>
    <property type="evidence" value="ECO:0007669"/>
    <property type="project" value="TreeGrafter"/>
</dbReference>
<dbReference type="GO" id="GO:0008176">
    <property type="term" value="F:tRNA (guanine(46)-N7)-methyltransferase activity"/>
    <property type="evidence" value="ECO:0007669"/>
    <property type="project" value="UniProtKB-UniRule"/>
</dbReference>
<dbReference type="GO" id="GO:0000049">
    <property type="term" value="F:tRNA binding"/>
    <property type="evidence" value="ECO:0007669"/>
    <property type="project" value="UniProtKB-UniRule"/>
</dbReference>
<dbReference type="Gene3D" id="3.40.50.150">
    <property type="entry name" value="Vaccinia Virus protein VP39"/>
    <property type="match status" value="1"/>
</dbReference>
<dbReference type="HAMAP" id="MF_03055">
    <property type="entry name" value="tRNA_methyltr_TrmB_euk"/>
    <property type="match status" value="1"/>
</dbReference>
<dbReference type="InterPro" id="IPR029063">
    <property type="entry name" value="SAM-dependent_MTases_sf"/>
</dbReference>
<dbReference type="InterPro" id="IPR025763">
    <property type="entry name" value="Trm8_euk"/>
</dbReference>
<dbReference type="InterPro" id="IPR003358">
    <property type="entry name" value="tRNA_(Gua-N-7)_MeTrfase_Trmb"/>
</dbReference>
<dbReference type="PANTHER" id="PTHR23417">
    <property type="entry name" value="3-DEOXY-D-MANNO-OCTULOSONIC-ACID TRANSFERASE/TRNA GUANINE-N 7 - -METHYLTRANSFERASE"/>
    <property type="match status" value="1"/>
</dbReference>
<dbReference type="PANTHER" id="PTHR23417:SF16">
    <property type="entry name" value="TRNA (GUANINE-N(7)-)-METHYLTRANSFERASE"/>
    <property type="match status" value="1"/>
</dbReference>
<dbReference type="Pfam" id="PF02390">
    <property type="entry name" value="Methyltransf_4"/>
    <property type="match status" value="2"/>
</dbReference>
<dbReference type="SUPFAM" id="SSF53335">
    <property type="entry name" value="S-adenosyl-L-methionine-dependent methyltransferases"/>
    <property type="match status" value="1"/>
</dbReference>
<dbReference type="PROSITE" id="PS51625">
    <property type="entry name" value="SAM_MT_TRMB"/>
    <property type="match status" value="1"/>
</dbReference>
<name>TRMB_NEOFI</name>
<reference key="1">
    <citation type="journal article" date="2008" name="PLoS Genet.">
        <title>Genomic islands in the pathogenic filamentous fungus Aspergillus fumigatus.</title>
        <authorList>
            <person name="Fedorova N.D."/>
            <person name="Khaldi N."/>
            <person name="Joardar V.S."/>
            <person name="Maiti R."/>
            <person name="Amedeo P."/>
            <person name="Anderson M.J."/>
            <person name="Crabtree J."/>
            <person name="Silva J.C."/>
            <person name="Badger J.H."/>
            <person name="Albarraq A."/>
            <person name="Angiuoli S."/>
            <person name="Bussey H."/>
            <person name="Bowyer P."/>
            <person name="Cotty P.J."/>
            <person name="Dyer P.S."/>
            <person name="Egan A."/>
            <person name="Galens K."/>
            <person name="Fraser-Liggett C.M."/>
            <person name="Haas B.J."/>
            <person name="Inman J.M."/>
            <person name="Kent R."/>
            <person name="Lemieux S."/>
            <person name="Malavazi I."/>
            <person name="Orvis J."/>
            <person name="Roemer T."/>
            <person name="Ronning C.M."/>
            <person name="Sundaram J.P."/>
            <person name="Sutton G."/>
            <person name="Turner G."/>
            <person name="Venter J.C."/>
            <person name="White O.R."/>
            <person name="Whitty B.R."/>
            <person name="Youngman P."/>
            <person name="Wolfe K.H."/>
            <person name="Goldman G.H."/>
            <person name="Wortman J.R."/>
            <person name="Jiang B."/>
            <person name="Denning D.W."/>
            <person name="Nierman W.C."/>
        </authorList>
    </citation>
    <scope>NUCLEOTIDE SEQUENCE [LARGE SCALE GENOMIC DNA]</scope>
    <source>
        <strain>ATCC 1020 / DSM 3700 / CBS 544.65 / FGSC A1164 / JCM 1740 / NRRL 181 / WB 181</strain>
    </source>
</reference>
<proteinExistence type="inferred from homology"/>